<reference key="1">
    <citation type="journal article" date="1998" name="Nature">
        <title>Analysis of 1.9 Mb of contiguous sequence from chromosome 4 of Arabidopsis thaliana.</title>
        <authorList>
            <person name="Bevan M."/>
            <person name="Bancroft I."/>
            <person name="Bent E."/>
            <person name="Love K."/>
            <person name="Goodman H.M."/>
            <person name="Dean C."/>
            <person name="Bergkamp R."/>
            <person name="Dirkse W."/>
            <person name="van Staveren M."/>
            <person name="Stiekema W."/>
            <person name="Drost L."/>
            <person name="Ridley P."/>
            <person name="Hudson S.-A."/>
            <person name="Patel K."/>
            <person name="Murphy G."/>
            <person name="Piffanelli P."/>
            <person name="Wedler H."/>
            <person name="Wedler E."/>
            <person name="Wambutt R."/>
            <person name="Weitzenegger T."/>
            <person name="Pohl T."/>
            <person name="Terryn N."/>
            <person name="Gielen J."/>
            <person name="Villarroel R."/>
            <person name="De Clercq R."/>
            <person name="van Montagu M."/>
            <person name="Lecharny A."/>
            <person name="Aubourg S."/>
            <person name="Gy I."/>
            <person name="Kreis M."/>
            <person name="Lao N."/>
            <person name="Kavanagh T."/>
            <person name="Hempel S."/>
            <person name="Kotter P."/>
            <person name="Entian K.-D."/>
            <person name="Rieger M."/>
            <person name="Schaefer M."/>
            <person name="Funk B."/>
            <person name="Mueller-Auer S."/>
            <person name="Silvey M."/>
            <person name="James R."/>
            <person name="Monfort A."/>
            <person name="Pons A."/>
            <person name="Puigdomenech P."/>
            <person name="Douka A."/>
            <person name="Voukelatou E."/>
            <person name="Milioni D."/>
            <person name="Hatzopoulos P."/>
            <person name="Piravandi E."/>
            <person name="Obermaier B."/>
            <person name="Hilbert H."/>
            <person name="Duesterhoeft A."/>
            <person name="Moores T."/>
            <person name="Jones J.D.G."/>
            <person name="Eneva T."/>
            <person name="Palme K."/>
            <person name="Benes V."/>
            <person name="Rechmann S."/>
            <person name="Ansorge W."/>
            <person name="Cooke R."/>
            <person name="Berger C."/>
            <person name="Delseny M."/>
            <person name="Voet M."/>
            <person name="Volckaert G."/>
            <person name="Mewes H.-W."/>
            <person name="Klosterman S."/>
            <person name="Schueller C."/>
            <person name="Chalwatzis N."/>
        </authorList>
    </citation>
    <scope>NUCLEOTIDE SEQUENCE [LARGE SCALE GENOMIC DNA]</scope>
    <source>
        <strain>cv. Columbia</strain>
    </source>
</reference>
<reference key="2">
    <citation type="journal article" date="1999" name="Nature">
        <title>Sequence and analysis of chromosome 4 of the plant Arabidopsis thaliana.</title>
        <authorList>
            <person name="Mayer K.F.X."/>
            <person name="Schueller C."/>
            <person name="Wambutt R."/>
            <person name="Murphy G."/>
            <person name="Volckaert G."/>
            <person name="Pohl T."/>
            <person name="Duesterhoeft A."/>
            <person name="Stiekema W."/>
            <person name="Entian K.-D."/>
            <person name="Terryn N."/>
            <person name="Harris B."/>
            <person name="Ansorge W."/>
            <person name="Brandt P."/>
            <person name="Grivell L.A."/>
            <person name="Rieger M."/>
            <person name="Weichselgartner M."/>
            <person name="de Simone V."/>
            <person name="Obermaier B."/>
            <person name="Mache R."/>
            <person name="Mueller M."/>
            <person name="Kreis M."/>
            <person name="Delseny M."/>
            <person name="Puigdomenech P."/>
            <person name="Watson M."/>
            <person name="Schmidtheini T."/>
            <person name="Reichert B."/>
            <person name="Portetelle D."/>
            <person name="Perez-Alonso M."/>
            <person name="Boutry M."/>
            <person name="Bancroft I."/>
            <person name="Vos P."/>
            <person name="Hoheisel J."/>
            <person name="Zimmermann W."/>
            <person name="Wedler H."/>
            <person name="Ridley P."/>
            <person name="Langham S.-A."/>
            <person name="McCullagh B."/>
            <person name="Bilham L."/>
            <person name="Robben J."/>
            <person name="van der Schueren J."/>
            <person name="Grymonprez B."/>
            <person name="Chuang Y.-J."/>
            <person name="Vandenbussche F."/>
            <person name="Braeken M."/>
            <person name="Weltjens I."/>
            <person name="Voet M."/>
            <person name="Bastiaens I."/>
            <person name="Aert R."/>
            <person name="Defoor E."/>
            <person name="Weitzenegger T."/>
            <person name="Bothe G."/>
            <person name="Ramsperger U."/>
            <person name="Hilbert H."/>
            <person name="Braun M."/>
            <person name="Holzer E."/>
            <person name="Brandt A."/>
            <person name="Peters S."/>
            <person name="van Staveren M."/>
            <person name="Dirkse W."/>
            <person name="Mooijman P."/>
            <person name="Klein Lankhorst R."/>
            <person name="Rose M."/>
            <person name="Hauf J."/>
            <person name="Koetter P."/>
            <person name="Berneiser S."/>
            <person name="Hempel S."/>
            <person name="Feldpausch M."/>
            <person name="Lamberth S."/>
            <person name="Van den Daele H."/>
            <person name="De Keyser A."/>
            <person name="Buysshaert C."/>
            <person name="Gielen J."/>
            <person name="Villarroel R."/>
            <person name="De Clercq R."/>
            <person name="van Montagu M."/>
            <person name="Rogers J."/>
            <person name="Cronin A."/>
            <person name="Quail M.A."/>
            <person name="Bray-Allen S."/>
            <person name="Clark L."/>
            <person name="Doggett J."/>
            <person name="Hall S."/>
            <person name="Kay M."/>
            <person name="Lennard N."/>
            <person name="McLay K."/>
            <person name="Mayes R."/>
            <person name="Pettett A."/>
            <person name="Rajandream M.A."/>
            <person name="Lyne M."/>
            <person name="Benes V."/>
            <person name="Rechmann S."/>
            <person name="Borkova D."/>
            <person name="Bloecker H."/>
            <person name="Scharfe M."/>
            <person name="Grimm M."/>
            <person name="Loehnert T.-H."/>
            <person name="Dose S."/>
            <person name="de Haan M."/>
            <person name="Maarse A.C."/>
            <person name="Schaefer M."/>
            <person name="Mueller-Auer S."/>
            <person name="Gabel C."/>
            <person name="Fuchs M."/>
            <person name="Fartmann B."/>
            <person name="Granderath K."/>
            <person name="Dauner D."/>
            <person name="Herzl A."/>
            <person name="Neumann S."/>
            <person name="Argiriou A."/>
            <person name="Vitale D."/>
            <person name="Liguori R."/>
            <person name="Piravandi E."/>
            <person name="Massenet O."/>
            <person name="Quigley F."/>
            <person name="Clabauld G."/>
            <person name="Muendlein A."/>
            <person name="Felber R."/>
            <person name="Schnabl S."/>
            <person name="Hiller R."/>
            <person name="Schmidt W."/>
            <person name="Lecharny A."/>
            <person name="Aubourg S."/>
            <person name="Chefdor F."/>
            <person name="Cooke R."/>
            <person name="Berger C."/>
            <person name="Monfort A."/>
            <person name="Casacuberta E."/>
            <person name="Gibbons T."/>
            <person name="Weber N."/>
            <person name="Vandenbol M."/>
            <person name="Bargues M."/>
            <person name="Terol J."/>
            <person name="Torres A."/>
            <person name="Perez-Perez A."/>
            <person name="Purnelle B."/>
            <person name="Bent E."/>
            <person name="Johnson S."/>
            <person name="Tacon D."/>
            <person name="Jesse T."/>
            <person name="Heijnen L."/>
            <person name="Schwarz S."/>
            <person name="Scholler P."/>
            <person name="Heber S."/>
            <person name="Francs P."/>
            <person name="Bielke C."/>
            <person name="Frishman D."/>
            <person name="Haase D."/>
            <person name="Lemcke K."/>
            <person name="Mewes H.-W."/>
            <person name="Stocker S."/>
            <person name="Zaccaria P."/>
            <person name="Bevan M."/>
            <person name="Wilson R.K."/>
            <person name="de la Bastide M."/>
            <person name="Habermann K."/>
            <person name="Parnell L."/>
            <person name="Dedhia N."/>
            <person name="Gnoj L."/>
            <person name="Schutz K."/>
            <person name="Huang E."/>
            <person name="Spiegel L."/>
            <person name="Sekhon M."/>
            <person name="Murray J."/>
            <person name="Sheet P."/>
            <person name="Cordes M."/>
            <person name="Abu-Threideh J."/>
            <person name="Stoneking T."/>
            <person name="Kalicki J."/>
            <person name="Graves T."/>
            <person name="Harmon G."/>
            <person name="Edwards J."/>
            <person name="Latreille P."/>
            <person name="Courtney L."/>
            <person name="Cloud J."/>
            <person name="Abbott A."/>
            <person name="Scott K."/>
            <person name="Johnson D."/>
            <person name="Minx P."/>
            <person name="Bentley D."/>
            <person name="Fulton B."/>
            <person name="Miller N."/>
            <person name="Greco T."/>
            <person name="Kemp K."/>
            <person name="Kramer J."/>
            <person name="Fulton L."/>
            <person name="Mardis E."/>
            <person name="Dante M."/>
            <person name="Pepin K."/>
            <person name="Hillier L.W."/>
            <person name="Nelson J."/>
            <person name="Spieth J."/>
            <person name="Ryan E."/>
            <person name="Andrews S."/>
            <person name="Geisel C."/>
            <person name="Layman D."/>
            <person name="Du H."/>
            <person name="Ali J."/>
            <person name="Berghoff A."/>
            <person name="Jones K."/>
            <person name="Drone K."/>
            <person name="Cotton M."/>
            <person name="Joshu C."/>
            <person name="Antonoiu B."/>
            <person name="Zidanic M."/>
            <person name="Strong C."/>
            <person name="Sun H."/>
            <person name="Lamar B."/>
            <person name="Yordan C."/>
            <person name="Ma P."/>
            <person name="Zhong J."/>
            <person name="Preston R."/>
            <person name="Vil D."/>
            <person name="Shekher M."/>
            <person name="Matero A."/>
            <person name="Shah R."/>
            <person name="Swaby I.K."/>
            <person name="O'Shaughnessy A."/>
            <person name="Rodriguez M."/>
            <person name="Hoffman J."/>
            <person name="Till S."/>
            <person name="Granat S."/>
            <person name="Shohdy N."/>
            <person name="Hasegawa A."/>
            <person name="Hameed A."/>
            <person name="Lodhi M."/>
            <person name="Johnson A."/>
            <person name="Chen E."/>
            <person name="Marra M.A."/>
            <person name="Martienssen R."/>
            <person name="McCombie W.R."/>
        </authorList>
    </citation>
    <scope>NUCLEOTIDE SEQUENCE [LARGE SCALE GENOMIC DNA]</scope>
    <source>
        <strain>cv. Columbia</strain>
    </source>
</reference>
<reference key="3">
    <citation type="journal article" date="2017" name="Plant J.">
        <title>Araport11: a complete reannotation of the Arabidopsis thaliana reference genome.</title>
        <authorList>
            <person name="Cheng C.Y."/>
            <person name="Krishnakumar V."/>
            <person name="Chan A.P."/>
            <person name="Thibaud-Nissen F."/>
            <person name="Schobel S."/>
            <person name="Town C.D."/>
        </authorList>
    </citation>
    <scope>GENOME REANNOTATION</scope>
    <source>
        <strain>cv. Columbia</strain>
    </source>
</reference>
<reference key="4">
    <citation type="journal article" date="2003" name="Science">
        <title>Empirical analysis of transcriptional activity in the Arabidopsis genome.</title>
        <authorList>
            <person name="Yamada K."/>
            <person name="Lim J."/>
            <person name="Dale J.M."/>
            <person name="Chen H."/>
            <person name="Shinn P."/>
            <person name="Palm C.J."/>
            <person name="Southwick A.M."/>
            <person name="Wu H.C."/>
            <person name="Kim C.J."/>
            <person name="Nguyen M."/>
            <person name="Pham P.K."/>
            <person name="Cheuk R.F."/>
            <person name="Karlin-Newmann G."/>
            <person name="Liu S.X."/>
            <person name="Lam B."/>
            <person name="Sakano H."/>
            <person name="Wu T."/>
            <person name="Yu G."/>
            <person name="Miranda M."/>
            <person name="Quach H.L."/>
            <person name="Tripp M."/>
            <person name="Chang C.H."/>
            <person name="Lee J.M."/>
            <person name="Toriumi M.J."/>
            <person name="Chan M.M."/>
            <person name="Tang C.C."/>
            <person name="Onodera C.S."/>
            <person name="Deng J.M."/>
            <person name="Akiyama K."/>
            <person name="Ansari Y."/>
            <person name="Arakawa T."/>
            <person name="Banh J."/>
            <person name="Banno F."/>
            <person name="Bowser L."/>
            <person name="Brooks S.Y."/>
            <person name="Carninci P."/>
            <person name="Chao Q."/>
            <person name="Choy N."/>
            <person name="Enju A."/>
            <person name="Goldsmith A.D."/>
            <person name="Gurjal M."/>
            <person name="Hansen N.F."/>
            <person name="Hayashizaki Y."/>
            <person name="Johnson-Hopson C."/>
            <person name="Hsuan V.W."/>
            <person name="Iida K."/>
            <person name="Karnes M."/>
            <person name="Khan S."/>
            <person name="Koesema E."/>
            <person name="Ishida J."/>
            <person name="Jiang P.X."/>
            <person name="Jones T."/>
            <person name="Kawai J."/>
            <person name="Kamiya A."/>
            <person name="Meyers C."/>
            <person name="Nakajima M."/>
            <person name="Narusaka M."/>
            <person name="Seki M."/>
            <person name="Sakurai T."/>
            <person name="Satou M."/>
            <person name="Tamse R."/>
            <person name="Vaysberg M."/>
            <person name="Wallender E.K."/>
            <person name="Wong C."/>
            <person name="Yamamura Y."/>
            <person name="Yuan S."/>
            <person name="Shinozaki K."/>
            <person name="Davis R.W."/>
            <person name="Theologis A."/>
            <person name="Ecker J.R."/>
        </authorList>
    </citation>
    <scope>NUCLEOTIDE SEQUENCE [LARGE SCALE MRNA]</scope>
    <source>
        <strain>cv. Columbia</strain>
    </source>
</reference>
<reference key="5">
    <citation type="journal article" date="2007" name="Mol. Cell. Proteomics">
        <title>Multidimensional protein identification technology (MudPIT) analysis of ubiquitinated proteins in plants.</title>
        <authorList>
            <person name="Maor R."/>
            <person name="Jones A."/>
            <person name="Nuehse T.S."/>
            <person name="Studholme D.J."/>
            <person name="Peck S.C."/>
            <person name="Shirasu K."/>
        </authorList>
    </citation>
    <scope>IDENTIFICATION BY MASS SPECTROMETRY [LARGE SCALE ANALYSIS]</scope>
</reference>
<reference key="6">
    <citation type="journal article" date="2014" name="Plant Physiol.">
        <title>Endomembrane trafficking protein SEC24A regulates cell size patterning in Arabidopsis.</title>
        <authorList>
            <person name="Qu X."/>
            <person name="Chatty P.R."/>
            <person name="Roeder A.H.K."/>
        </authorList>
    </citation>
    <scope>INTERACTION WITH SEC24A</scope>
    <scope>GENE FAMILY</scope>
    <source>
        <strain>cv. Landsberg erecta</strain>
    </source>
</reference>
<reference key="7">
    <citation type="journal article" date="2014" name="PLoS ONE">
        <title>Study of the plant COPII vesicle coat subunits by functional complementation of yeast Saccharomyces cerevisiae mutants.</title>
        <authorList>
            <person name="De Craene J.-O."/>
            <person name="Courte F."/>
            <person name="Rinaldi B."/>
            <person name="Fitterer C."/>
            <person name="Herranz M.C."/>
            <person name="Schmitt-Keichinger C."/>
            <person name="Ritzenthaler C."/>
            <person name="Friant S."/>
        </authorList>
    </citation>
    <scope>FUNCTION</scope>
    <scope>GENE FAMILY</scope>
    <source>
        <strain>cv. Columbia</strain>
    </source>
</reference>
<reference key="8">
    <citation type="journal article" date="2016" name="Trends Plant Sci.">
        <title>COPII paralogs in plants: functional redundancy or diversity?</title>
        <authorList>
            <person name="Chung K.P."/>
            <person name="Zeng Y."/>
            <person name="Jiang L."/>
        </authorList>
    </citation>
    <scope>REVIEW ON COAT PROTEIN COMPLEX II (COPII) VESICLES</scope>
    <scope>GENE FAMILY</scope>
    <scope>NOMENCLATURE</scope>
</reference>
<sequence>MAEMADKAKVEEMDWEGIDGVRMTWNLWPRTKVEASKCVIPLAASISPIRRHPLILDLPYAPLDCKTCKALLNAFARVDFAAMNWVCPFCYHRNHFPSHYHSISEINLPGELYPQYTTVEYTLPPDPSRVPPPPVFVFVLDTCMIEEELGYAKSALKQAIGLLPENALVGFVSFGTQAHVHELGFSEMSKVFVFKGNKEVTKDQILDQLGLGSSSRRAPTSGFSKGAQNGFQSSGVDRFLLPASECEYTLDLLLDELQSDQWPVQPGHRPQRCTGVALSVAAGLLGACLPGTGARIVALVGGPCTEGPGTIISKDLSDPVRSHKDLDKDAAPYYKKAVKFYDSIAKQLVAQGHVLDLFASALDQVGVAEMKVAVESTGGLVVLSESFGHSVFKDSFKRMFEDGEHSLGLCFNGTLEINCSKDIKIQGVIGPCSSLEKKGPNVADTVIGEGNTSAWKLCGLDKSTCLTVFFDLSSTGSTAPGALNQQLYLQFITRYQNSEGKSLARVTTLTRQWVDTAVSTENLVQGFDQETAAVVMARLTSLKMETEEGFDATRWLDRTLIRLCSKFGEYRKDDPTSFTLKPYLTLFPQFMFNLRRSQFVQVFNNSPDETAYFRMLLNRENISNAIVMIQPSLTSYSFNSGPQAALLDVASIAADKILLLDAYFSVVVFHGMTISQWRNMGYHHQPEHEAFAQLLQAPQEDSQMLVRERFPVPRLVVCDQHGSQARFLLAKLNPSATYNNANEMSAGSDIIFTDDVSLQVFIEHLQKLAVQS</sequence>
<keyword id="KW-0968">Cytoplasmic vesicle</keyword>
<keyword id="KW-0256">Endoplasmic reticulum</keyword>
<keyword id="KW-0931">ER-Golgi transport</keyword>
<keyword id="KW-0472">Membrane</keyword>
<keyword id="KW-0479">Metal-binding</keyword>
<keyword id="KW-0653">Protein transport</keyword>
<keyword id="KW-1185">Reference proteome</keyword>
<keyword id="KW-0813">Transport</keyword>
<keyword id="KW-0862">Zinc</keyword>
<protein>
    <recommendedName>
        <fullName evidence="7">Protein transport protein SEC23 F</fullName>
        <shortName evidence="7">AtSEC23F</shortName>
    </recommendedName>
    <alternativeName>
        <fullName evidence="5">Protein transport protein SEC23 B</fullName>
        <shortName evidence="5">AtSEC23B</shortName>
    </alternativeName>
    <alternativeName>
        <fullName evidence="6">Protein transport protein SEC23 D</fullName>
    </alternativeName>
</protein>
<comment type="function">
    <text evidence="3">Component of the coat protein complex II (COPII) which promotes the formation of transport vesicles from the endoplasmic reticulum (ER) (PubMed:24587212). The coat has two main functions, the physical deformation of the endoplasmic reticulum membrane into vesicles and the selection of cargo molecules (PubMed:24587212).</text>
</comment>
<comment type="subunit">
    <text evidence="1 4">Component of the coat protein complex II (COPII), composed of at least five proteins: the Sec23/24 complex, the Sec13/31 complex and Sar1 (By similarity). Interacts with SEC24A (PubMed:25315606).</text>
</comment>
<comment type="subcellular location">
    <subcellularLocation>
        <location evidence="2">Cytoplasmic vesicle</location>
        <location evidence="2">COPII-coated vesicle membrane</location>
        <topology evidence="2">Peripheral membrane protein</topology>
        <orientation evidence="2">Cytoplasmic side</orientation>
    </subcellularLocation>
    <subcellularLocation>
        <location evidence="2">Endoplasmic reticulum membrane</location>
        <topology evidence="2">Peripheral membrane protein</topology>
        <orientation evidence="2">Cytoplasmic side</orientation>
    </subcellularLocation>
    <subcellularLocation>
        <location evidence="2">Membrane</location>
        <topology evidence="2">Peripheral membrane protein</topology>
        <orientation evidence="2">Cytoplasmic side</orientation>
    </subcellularLocation>
</comment>
<comment type="similarity">
    <text evidence="8">Belongs to the SEC23/SEC24 family. SEC23 subfamily.</text>
</comment>
<comment type="sequence caution" evidence="8">
    <conflict type="erroneous initiation">
        <sequence resource="EMBL-CDS" id="CAB10195"/>
    </conflict>
    <text>Truncated N-terminus.</text>
</comment>
<comment type="sequence caution" evidence="8">
    <conflict type="erroneous initiation">
        <sequence resource="EMBL-CDS" id="CAB78458"/>
    </conflict>
    <text>Truncated N-terminus.</text>
</comment>
<name>SC23F_ARATH</name>
<proteinExistence type="evidence at protein level"/>
<dbReference type="EMBL" id="Z97335">
    <property type="protein sequence ID" value="CAB10195.1"/>
    <property type="status" value="ALT_INIT"/>
    <property type="molecule type" value="Genomic_DNA"/>
</dbReference>
<dbReference type="EMBL" id="AL161538">
    <property type="protein sequence ID" value="CAB78458.1"/>
    <property type="status" value="ALT_INIT"/>
    <property type="molecule type" value="Genomic_DNA"/>
</dbReference>
<dbReference type="EMBL" id="CP002687">
    <property type="protein sequence ID" value="AEE83387.1"/>
    <property type="molecule type" value="Genomic_DNA"/>
</dbReference>
<dbReference type="EMBL" id="AY074391">
    <property type="protein sequence ID" value="AAL67087.1"/>
    <property type="molecule type" value="mRNA"/>
</dbReference>
<dbReference type="EMBL" id="AY093776">
    <property type="protein sequence ID" value="AAM10394.1"/>
    <property type="molecule type" value="mRNA"/>
</dbReference>
<dbReference type="EMBL" id="AY122928">
    <property type="protein sequence ID" value="AAM67461.1"/>
    <property type="molecule type" value="mRNA"/>
</dbReference>
<dbReference type="PIR" id="A71403">
    <property type="entry name" value="A71403"/>
</dbReference>
<dbReference type="RefSeq" id="NP_193152.2">
    <property type="nucleotide sequence ID" value="NM_117493.4"/>
</dbReference>
<dbReference type="SMR" id="Q8VXX0"/>
<dbReference type="FunCoup" id="Q8VXX0">
    <property type="interactions" value="4758"/>
</dbReference>
<dbReference type="IntAct" id="Q8VXX0">
    <property type="interactions" value="2"/>
</dbReference>
<dbReference type="iPTMnet" id="Q8VXX0"/>
<dbReference type="ProteomicsDB" id="181560"/>
<dbReference type="EnsemblPlants" id="AT4G14160.2">
    <property type="protein sequence ID" value="AT4G14160.2"/>
    <property type="gene ID" value="AT4G14160"/>
</dbReference>
<dbReference type="GeneID" id="827055"/>
<dbReference type="Gramene" id="AT4G14160.2">
    <property type="protein sequence ID" value="AT4G14160.2"/>
    <property type="gene ID" value="AT4G14160"/>
</dbReference>
<dbReference type="KEGG" id="ath:AT4G14160"/>
<dbReference type="Araport" id="AT4G14160"/>
<dbReference type="TAIR" id="AT4G14160">
    <property type="gene designation" value="ATSEC23F"/>
</dbReference>
<dbReference type="HOGENOM" id="CLU_008658_3_0_1"/>
<dbReference type="OMA" id="GMLEIGC"/>
<dbReference type="OrthoDB" id="10256289at2759"/>
<dbReference type="PRO" id="PR:Q8VXX0"/>
<dbReference type="Proteomes" id="UP000006548">
    <property type="component" value="Chromosome 4"/>
</dbReference>
<dbReference type="ExpressionAtlas" id="Q8VXX0">
    <property type="expression patterns" value="baseline and differential"/>
</dbReference>
<dbReference type="GO" id="GO:0030127">
    <property type="term" value="C:COPII vesicle coat"/>
    <property type="evidence" value="ECO:0007669"/>
    <property type="project" value="InterPro"/>
</dbReference>
<dbReference type="GO" id="GO:0005789">
    <property type="term" value="C:endoplasmic reticulum membrane"/>
    <property type="evidence" value="ECO:0007669"/>
    <property type="project" value="UniProtKB-SubCell"/>
</dbReference>
<dbReference type="GO" id="GO:0008270">
    <property type="term" value="F:zinc ion binding"/>
    <property type="evidence" value="ECO:0007669"/>
    <property type="project" value="InterPro"/>
</dbReference>
<dbReference type="GO" id="GO:0090114">
    <property type="term" value="P:COPII-coated vesicle budding"/>
    <property type="evidence" value="ECO:0007669"/>
    <property type="project" value="InterPro"/>
</dbReference>
<dbReference type="GO" id="GO:0006886">
    <property type="term" value="P:intracellular protein transport"/>
    <property type="evidence" value="ECO:0007669"/>
    <property type="project" value="InterPro"/>
</dbReference>
<dbReference type="CDD" id="cd01478">
    <property type="entry name" value="Sec23-like"/>
    <property type="match status" value="1"/>
</dbReference>
<dbReference type="CDD" id="cd11287">
    <property type="entry name" value="Sec23_C"/>
    <property type="match status" value="1"/>
</dbReference>
<dbReference type="FunFam" id="1.20.120.730:FF:000005">
    <property type="entry name" value="Protein transport protein SEC23"/>
    <property type="match status" value="1"/>
</dbReference>
<dbReference type="FunFam" id="2.30.30.380:FF:000001">
    <property type="entry name" value="Protein transport protein SEC23"/>
    <property type="match status" value="1"/>
</dbReference>
<dbReference type="FunFam" id="3.40.20.10:FF:000014">
    <property type="entry name" value="Protein transport protein SEC23"/>
    <property type="match status" value="1"/>
</dbReference>
<dbReference type="FunFam" id="3.40.50.410:FF:000008">
    <property type="entry name" value="Protein transport protein SEC23"/>
    <property type="match status" value="1"/>
</dbReference>
<dbReference type="Gene3D" id="2.60.40.1670">
    <property type="entry name" value="beta-sandwich domain of Sec23/24"/>
    <property type="match status" value="1"/>
</dbReference>
<dbReference type="Gene3D" id="1.20.120.730">
    <property type="entry name" value="Sec23/Sec24 helical domain"/>
    <property type="match status" value="1"/>
</dbReference>
<dbReference type="Gene3D" id="3.40.20.10">
    <property type="entry name" value="Severin"/>
    <property type="match status" value="1"/>
</dbReference>
<dbReference type="Gene3D" id="3.40.50.410">
    <property type="entry name" value="von Willebrand factor, type A domain"/>
    <property type="match status" value="1"/>
</dbReference>
<dbReference type="Gene3D" id="2.30.30.380">
    <property type="entry name" value="Zn-finger domain of Sec23/24"/>
    <property type="match status" value="1"/>
</dbReference>
<dbReference type="InterPro" id="IPR029006">
    <property type="entry name" value="ADF-H/Gelsolin-like_dom_sf"/>
</dbReference>
<dbReference type="InterPro" id="IPR007123">
    <property type="entry name" value="Gelsolin-like_dom"/>
</dbReference>
<dbReference type="InterPro" id="IPR036180">
    <property type="entry name" value="Gelsolin-like_dom_sf"/>
</dbReference>
<dbReference type="InterPro" id="IPR037364">
    <property type="entry name" value="Sec23"/>
</dbReference>
<dbReference type="InterPro" id="IPR006900">
    <property type="entry name" value="Sec23/24_helical_dom"/>
</dbReference>
<dbReference type="InterPro" id="IPR036175">
    <property type="entry name" value="Sec23/24_helical_dom_sf"/>
</dbReference>
<dbReference type="InterPro" id="IPR006896">
    <property type="entry name" value="Sec23/24_trunk_dom"/>
</dbReference>
<dbReference type="InterPro" id="IPR012990">
    <property type="entry name" value="Sec23_24_beta_S"/>
</dbReference>
<dbReference type="InterPro" id="IPR037550">
    <property type="entry name" value="Sec23_C"/>
</dbReference>
<dbReference type="InterPro" id="IPR036465">
    <property type="entry name" value="vWFA_dom_sf"/>
</dbReference>
<dbReference type="InterPro" id="IPR006895">
    <property type="entry name" value="Znf_Sec23_Sec24"/>
</dbReference>
<dbReference type="InterPro" id="IPR036174">
    <property type="entry name" value="Znf_Sec23_Sec24_sf"/>
</dbReference>
<dbReference type="PANTHER" id="PTHR11141">
    <property type="entry name" value="PROTEIN TRANSPORT PROTEIN SEC23"/>
    <property type="match status" value="1"/>
</dbReference>
<dbReference type="PANTHER" id="PTHR11141:SF0">
    <property type="entry name" value="PROTEIN TRANSPORT PROTEIN SEC23"/>
    <property type="match status" value="1"/>
</dbReference>
<dbReference type="Pfam" id="PF00626">
    <property type="entry name" value="Gelsolin"/>
    <property type="match status" value="1"/>
</dbReference>
<dbReference type="Pfam" id="PF08033">
    <property type="entry name" value="Sec23_BS"/>
    <property type="match status" value="1"/>
</dbReference>
<dbReference type="Pfam" id="PF04815">
    <property type="entry name" value="Sec23_helical"/>
    <property type="match status" value="1"/>
</dbReference>
<dbReference type="Pfam" id="PF04811">
    <property type="entry name" value="Sec23_trunk"/>
    <property type="match status" value="1"/>
</dbReference>
<dbReference type="Pfam" id="PF04810">
    <property type="entry name" value="zf-Sec23_Sec24"/>
    <property type="match status" value="1"/>
</dbReference>
<dbReference type="SUPFAM" id="SSF81995">
    <property type="entry name" value="beta-sandwich domain of Sec23/24"/>
    <property type="match status" value="1"/>
</dbReference>
<dbReference type="SUPFAM" id="SSF82754">
    <property type="entry name" value="C-terminal, gelsolin-like domain of Sec23/24"/>
    <property type="match status" value="1"/>
</dbReference>
<dbReference type="SUPFAM" id="SSF81811">
    <property type="entry name" value="Helical domain of Sec23/24"/>
    <property type="match status" value="1"/>
</dbReference>
<dbReference type="SUPFAM" id="SSF53300">
    <property type="entry name" value="vWA-like"/>
    <property type="match status" value="1"/>
</dbReference>
<dbReference type="SUPFAM" id="SSF82919">
    <property type="entry name" value="Zn-finger domain of Sec23/24"/>
    <property type="match status" value="1"/>
</dbReference>
<evidence type="ECO:0000250" key="1">
    <source>
        <dbReference type="UniProtKB" id="O95486"/>
    </source>
</evidence>
<evidence type="ECO:0000250" key="2">
    <source>
        <dbReference type="UniProtKB" id="P15303"/>
    </source>
</evidence>
<evidence type="ECO:0000269" key="3">
    <source>
    </source>
</evidence>
<evidence type="ECO:0000269" key="4">
    <source>
    </source>
</evidence>
<evidence type="ECO:0000303" key="5">
    <source>
    </source>
</evidence>
<evidence type="ECO:0000303" key="6">
    <source>
    </source>
</evidence>
<evidence type="ECO:0000303" key="7">
    <source>
    </source>
</evidence>
<evidence type="ECO:0000305" key="8"/>
<evidence type="ECO:0000312" key="9">
    <source>
        <dbReference type="Araport" id="AT4G14160"/>
    </source>
</evidence>
<evidence type="ECO:0000312" key="10">
    <source>
        <dbReference type="EMBL" id="CAB10195.1"/>
    </source>
</evidence>
<evidence type="ECO:0000312" key="11">
    <source>
        <dbReference type="EMBL" id="CAB78458.1"/>
    </source>
</evidence>
<feature type="chain" id="PRO_0000457106" description="Protein transport protein SEC23 F">
    <location>
        <begin position="1"/>
        <end position="772"/>
    </location>
</feature>
<feature type="region of interest" description="Zinc finger-like" evidence="1">
    <location>
        <begin position="65"/>
        <end position="90"/>
    </location>
</feature>
<feature type="binding site" evidence="2">
    <location>
        <position position="65"/>
    </location>
    <ligand>
        <name>Zn(2+)</name>
        <dbReference type="ChEBI" id="CHEBI:29105"/>
    </ligand>
</feature>
<feature type="binding site" evidence="2">
    <location>
        <position position="68"/>
    </location>
    <ligand>
        <name>Zn(2+)</name>
        <dbReference type="ChEBI" id="CHEBI:29105"/>
    </ligand>
</feature>
<feature type="binding site" evidence="2">
    <location>
        <position position="87"/>
    </location>
    <ligand>
        <name>Zn(2+)</name>
        <dbReference type="ChEBI" id="CHEBI:29105"/>
    </ligand>
</feature>
<feature type="binding site" evidence="2">
    <location>
        <position position="90"/>
    </location>
    <ligand>
        <name>Zn(2+)</name>
        <dbReference type="ChEBI" id="CHEBI:29105"/>
    </ligand>
</feature>
<feature type="sequence conflict" description="In Ref. 4; AAM10394." evidence="8" ref="4">
    <original>D</original>
    <variation>G</variation>
    <location>
        <position position="557"/>
    </location>
</feature>
<accession>Q8VXX0</accession>
<accession>O23275</accession>
<accession>Q8RW92</accession>
<gene>
    <name evidence="6 7" type="primary">SEC23F</name>
    <name evidence="5" type="synonym">SEC23B</name>
    <name evidence="6" type="synonym">SEC23D</name>
    <name evidence="9" type="ordered locus">At4g14160</name>
    <name evidence="10" type="ORF">dl3120w</name>
    <name evidence="11" type="ORF">FCAALL.112</name>
</gene>
<organism>
    <name type="scientific">Arabidopsis thaliana</name>
    <name type="common">Mouse-ear cress</name>
    <dbReference type="NCBI Taxonomy" id="3702"/>
    <lineage>
        <taxon>Eukaryota</taxon>
        <taxon>Viridiplantae</taxon>
        <taxon>Streptophyta</taxon>
        <taxon>Embryophyta</taxon>
        <taxon>Tracheophyta</taxon>
        <taxon>Spermatophyta</taxon>
        <taxon>Magnoliopsida</taxon>
        <taxon>eudicotyledons</taxon>
        <taxon>Gunneridae</taxon>
        <taxon>Pentapetalae</taxon>
        <taxon>rosids</taxon>
        <taxon>malvids</taxon>
        <taxon>Brassicales</taxon>
        <taxon>Brassicaceae</taxon>
        <taxon>Camelineae</taxon>
        <taxon>Arabidopsis</taxon>
    </lineage>
</organism>